<comment type="function">
    <text evidence="3 6 7">Secretory calcium-dependent phospholipase A2 that primarily targets extracellular lipids, exerting anti-inflammatory and immunosuppressive functions (PubMed:10455175, PubMed:10681567). Hydrolyzes the ester bond of the fatty acyl group attached at sn-2 position of phospholipids (phospholipase A2 activity) with preference for phosphatidylethanolamines and phosphatidylglycerols over phosphatidylcholines (PubMed:10455175). In draining lymph nodes, selectively hydrolyzes diacyl and alkenyl forms of phosphatidylethanolamines, releasing omega-3 polyunsaturated fatty acids (PUFAs) such as eicosapentaenoate and docosahexaenoate that are precursors of the anti-inflammatory lipid mediators, resolvins (By similarity). During the resolution phase of acute inflammation drives docosahexaenoate-derived resolvin D1 synthesis, which suppresses dendritic cell activation and T-helper 1 immune response (By similarity). May act in an autocrine and paracrine manner (By similarity). Via a mechanism independent of its catalytic activity, promotes differentiation of regulatory T cells (Tregs) and participates in the maintenance of immune tolerance (By similarity). May contribute to lipid remodeling of cellular membranes and generation of lipid mediators involved in pathogen clearance. Displays bactericidal activity against Gram-positive bacteria by directly hydrolyzing phospholipids of the bacterial membrane (By similarity).</text>
</comment>
<comment type="catalytic activity">
    <reaction evidence="6">
        <text>a 1,2-diacyl-sn-glycero-3-phosphoethanolamine + H2O = a 1-acyl-sn-glycero-3-phosphoethanolamine + a fatty acid + H(+)</text>
        <dbReference type="Rhea" id="RHEA:44604"/>
        <dbReference type="ChEBI" id="CHEBI:15377"/>
        <dbReference type="ChEBI" id="CHEBI:15378"/>
        <dbReference type="ChEBI" id="CHEBI:28868"/>
        <dbReference type="ChEBI" id="CHEBI:64381"/>
        <dbReference type="ChEBI" id="CHEBI:64612"/>
    </reaction>
    <physiologicalReaction direction="left-to-right" evidence="11">
        <dbReference type="Rhea" id="RHEA:44605"/>
    </physiologicalReaction>
</comment>
<comment type="catalytic activity">
    <reaction evidence="6">
        <text>1-hexadecanoyl-2-(9Z-octadecenoyl)-sn-glycero-3-phosphoethanolamine + H2O = 1-hexadecanoyl-sn-glycero-3-phosphoethanolamine + (9Z)-octadecenoate + H(+)</text>
        <dbReference type="Rhea" id="RHEA:40911"/>
        <dbReference type="ChEBI" id="CHEBI:15377"/>
        <dbReference type="ChEBI" id="CHEBI:15378"/>
        <dbReference type="ChEBI" id="CHEBI:30823"/>
        <dbReference type="ChEBI" id="CHEBI:73004"/>
        <dbReference type="ChEBI" id="CHEBI:73007"/>
    </reaction>
    <physiologicalReaction direction="left-to-right" evidence="11">
        <dbReference type="Rhea" id="RHEA:40912"/>
    </physiologicalReaction>
</comment>
<comment type="catalytic activity">
    <reaction evidence="6">
        <text>1-hexadecanoyl-2-(9Z,12Z-octadecadienoyl)-sn-glycero-3-phosphoethanolamine + H2O = 1-hexadecanoyl-sn-glycero-3-phosphoethanolamine + (9Z,12Z)-octadecadienoate + H(+)</text>
        <dbReference type="Rhea" id="RHEA:40815"/>
        <dbReference type="ChEBI" id="CHEBI:15377"/>
        <dbReference type="ChEBI" id="CHEBI:15378"/>
        <dbReference type="ChEBI" id="CHEBI:30245"/>
        <dbReference type="ChEBI" id="CHEBI:73004"/>
        <dbReference type="ChEBI" id="CHEBI:73008"/>
    </reaction>
    <physiologicalReaction direction="left-to-right" evidence="11">
        <dbReference type="Rhea" id="RHEA:40816"/>
    </physiologicalReaction>
</comment>
<comment type="catalytic activity">
    <reaction evidence="3">
        <text>1,2-dihexadecanoyl-sn-glycero-3-phospho-(1'-sn-glycerol) + H2O = 1-hexadecanoyl-sn-glycero-3-phospho-(1'-sn-glycerol) + hexadecanoate + H(+)</text>
        <dbReference type="Rhea" id="RHEA:45472"/>
        <dbReference type="ChEBI" id="CHEBI:7896"/>
        <dbReference type="ChEBI" id="CHEBI:15377"/>
        <dbReference type="ChEBI" id="CHEBI:15378"/>
        <dbReference type="ChEBI" id="CHEBI:72829"/>
        <dbReference type="ChEBI" id="CHEBI:75158"/>
    </reaction>
    <physiologicalReaction direction="left-to-right" evidence="3">
        <dbReference type="Rhea" id="RHEA:45473"/>
    </physiologicalReaction>
</comment>
<comment type="catalytic activity">
    <reaction evidence="6">
        <text>1-hexadecanoyl-2-(9Z-octadecenoyl)-sn-glycero-3-phospho-(1'-sn-glycerol) + H2O = 1-hexadecanoyl-sn-glycero-3-phospho-(1'-sn-glycerol) + (9Z)-octadecenoate + H(+)</text>
        <dbReference type="Rhea" id="RHEA:40919"/>
        <dbReference type="ChEBI" id="CHEBI:15377"/>
        <dbReference type="ChEBI" id="CHEBI:15378"/>
        <dbReference type="ChEBI" id="CHEBI:30823"/>
        <dbReference type="ChEBI" id="CHEBI:72841"/>
        <dbReference type="ChEBI" id="CHEBI:75158"/>
    </reaction>
    <physiologicalReaction direction="left-to-right" evidence="11">
        <dbReference type="Rhea" id="RHEA:40920"/>
    </physiologicalReaction>
</comment>
<comment type="catalytic activity">
    <reaction evidence="5 6 7">
        <text>a 1,2-diacyl-sn-glycero-3-phosphocholine + H2O = a 1-acyl-sn-glycero-3-phosphocholine + a fatty acid + H(+)</text>
        <dbReference type="Rhea" id="RHEA:15801"/>
        <dbReference type="ChEBI" id="CHEBI:15377"/>
        <dbReference type="ChEBI" id="CHEBI:15378"/>
        <dbReference type="ChEBI" id="CHEBI:28868"/>
        <dbReference type="ChEBI" id="CHEBI:57643"/>
        <dbReference type="ChEBI" id="CHEBI:58168"/>
        <dbReference type="EC" id="3.1.1.4"/>
    </reaction>
    <physiologicalReaction direction="left-to-right" evidence="11 12">
        <dbReference type="Rhea" id="RHEA:15802"/>
    </physiologicalReaction>
</comment>
<comment type="catalytic activity">
    <reaction evidence="6">
        <text>1,2-dihexadecanoyl-sn-glycero-3-phosphocholine + H2O = 1-hexadecanoyl-sn-glycero-3-phosphocholine + hexadecanoate + H(+)</text>
        <dbReference type="Rhea" id="RHEA:41223"/>
        <dbReference type="ChEBI" id="CHEBI:7896"/>
        <dbReference type="ChEBI" id="CHEBI:15377"/>
        <dbReference type="ChEBI" id="CHEBI:15378"/>
        <dbReference type="ChEBI" id="CHEBI:72998"/>
        <dbReference type="ChEBI" id="CHEBI:72999"/>
    </reaction>
    <physiologicalReaction direction="left-to-right" evidence="11">
        <dbReference type="Rhea" id="RHEA:41224"/>
    </physiologicalReaction>
</comment>
<comment type="catalytic activity">
    <reaction evidence="6 7">
        <text>1-hexadecanoyl-2-(9Z-octadecenoyl)-sn-glycero-3-phosphocholine + H2O = 1-hexadecanoyl-sn-glycero-3-phosphocholine + (9Z)-octadecenoate + H(+)</text>
        <dbReference type="Rhea" id="RHEA:38779"/>
        <dbReference type="ChEBI" id="CHEBI:15377"/>
        <dbReference type="ChEBI" id="CHEBI:15378"/>
        <dbReference type="ChEBI" id="CHEBI:30823"/>
        <dbReference type="ChEBI" id="CHEBI:72998"/>
        <dbReference type="ChEBI" id="CHEBI:73001"/>
    </reaction>
    <physiologicalReaction direction="left-to-right" evidence="11 12">
        <dbReference type="Rhea" id="RHEA:38780"/>
    </physiologicalReaction>
</comment>
<comment type="catalytic activity">
    <reaction evidence="6">
        <text>1-hexadecanoyl-2-(9Z,12Z-octadecadienoyl)-sn-glycero-3-phosphocholine + H2O = (9Z,12Z)-octadecadienoate + 1-hexadecanoyl-sn-glycero-3-phosphocholine + H(+)</text>
        <dbReference type="Rhea" id="RHEA:40811"/>
        <dbReference type="ChEBI" id="CHEBI:15377"/>
        <dbReference type="ChEBI" id="CHEBI:15378"/>
        <dbReference type="ChEBI" id="CHEBI:30245"/>
        <dbReference type="ChEBI" id="CHEBI:72998"/>
        <dbReference type="ChEBI" id="CHEBI:73002"/>
    </reaction>
    <physiologicalReaction direction="left-to-right" evidence="11">
        <dbReference type="Rhea" id="RHEA:40812"/>
    </physiologicalReaction>
</comment>
<comment type="catalytic activity">
    <reaction evidence="6">
        <text>1-hexadecanoyl-2-(4Z,7Z,10Z,13Z,16Z,19Z-docosahexaenoyl)-sn-glycero-3-phosphocholine + H2O = (4Z,7Z,10Z,13Z,16Z,19Z)-docosahexaenoate + 1-hexadecanoyl-sn-glycero-3-phosphocholine + H(+)</text>
        <dbReference type="Rhea" id="RHEA:41231"/>
        <dbReference type="ChEBI" id="CHEBI:15377"/>
        <dbReference type="ChEBI" id="CHEBI:15378"/>
        <dbReference type="ChEBI" id="CHEBI:72998"/>
        <dbReference type="ChEBI" id="CHEBI:74963"/>
        <dbReference type="ChEBI" id="CHEBI:77016"/>
    </reaction>
    <physiologicalReaction direction="left-to-right" evidence="11">
        <dbReference type="Rhea" id="RHEA:41232"/>
    </physiologicalReaction>
</comment>
<comment type="cofactor">
    <cofactor evidence="6">
        <name>Ca(2+)</name>
        <dbReference type="ChEBI" id="CHEBI:29108"/>
    </cofactor>
    <text>Binds 1 Ca(2+) ion per subunit.</text>
</comment>
<comment type="biophysicochemical properties">
    <phDependence>
        <text evidence="6">Optimum pH is 7-9.</text>
    </phDependence>
</comment>
<comment type="subcellular location">
    <subcellularLocation>
        <location evidence="6">Secreted</location>
    </subcellularLocation>
</comment>
<comment type="alternative products">
    <event type="alternative splicing"/>
    <isoform>
        <id>Q9UNK4-1</id>
        <name>1</name>
        <sequence type="displayed"/>
    </isoform>
    <isoform>
        <id>Q9UNK4-2</id>
        <name>2</name>
        <sequence type="described" ref="VSP_060595 VSP_060596"/>
    </isoform>
</comment>
<comment type="tissue specificity">
    <text evidence="6">Highly expressed in pancreas and spleen and less abundantly in colon, thymus, placenta, small intestine, and prostate.</text>
</comment>
<comment type="similarity">
    <text evidence="10">Belongs to the phospholipase A2 family.</text>
</comment>
<protein>
    <recommendedName>
        <fullName>Group IID secretory phospholipase A2</fullName>
        <shortName>GIID sPLA2</shortName>
        <shortName>sPLA2-IID</shortName>
        <ecNumber evidence="6 7">3.1.1.4</ecNumber>
    </recommendedName>
    <alternativeName>
        <fullName>PLA2IID</fullName>
    </alternativeName>
    <alternativeName>
        <fullName>Phosphatidylcholine 2-acylhydrolase 2D</fullName>
    </alternativeName>
    <alternativeName>
        <fullName>Secretory-type PLA, stroma-associated homolog</fullName>
    </alternativeName>
</protein>
<accession>Q9UNK4</accession>
<accession>A0A087WZT4</accession>
<accession>A8K2Z1</accession>
<accession>B1AEL9</accession>
<accession>Q9UK01</accession>
<proteinExistence type="evidence at protein level"/>
<dbReference type="EC" id="3.1.1.4" evidence="6 7"/>
<dbReference type="EMBL" id="AF112982">
    <property type="protein sequence ID" value="AAD51390.1"/>
    <property type="molecule type" value="mRNA"/>
</dbReference>
<dbReference type="EMBL" id="AF188625">
    <property type="protein sequence ID" value="AAF09020.1"/>
    <property type="molecule type" value="mRNA"/>
</dbReference>
<dbReference type="EMBL" id="AK290406">
    <property type="protein sequence ID" value="BAF83095.1"/>
    <property type="molecule type" value="mRNA"/>
</dbReference>
<dbReference type="EMBL" id="AK310156">
    <property type="status" value="NOT_ANNOTATED_CDS"/>
    <property type="molecule type" value="mRNA"/>
</dbReference>
<dbReference type="EMBL" id="EU447440">
    <property type="protein sequence ID" value="ACA06110.1"/>
    <property type="molecule type" value="Genomic_DNA"/>
</dbReference>
<dbReference type="EMBL" id="AL158172">
    <property type="status" value="NOT_ANNOTATED_CDS"/>
    <property type="molecule type" value="Genomic_DNA"/>
</dbReference>
<dbReference type="EMBL" id="BC025706">
    <property type="protein sequence ID" value="AAH25706.1"/>
    <property type="molecule type" value="mRNA"/>
</dbReference>
<dbReference type="CCDS" id="CCDS203.1">
    <molecule id="Q9UNK4-1"/>
</dbReference>
<dbReference type="CCDS" id="CCDS72721.1">
    <molecule id="Q9UNK4-2"/>
</dbReference>
<dbReference type="RefSeq" id="NP_001258743.1">
    <molecule id="Q9UNK4-2"/>
    <property type="nucleotide sequence ID" value="NM_001271814.2"/>
</dbReference>
<dbReference type="RefSeq" id="NP_036532.1">
    <molecule id="Q9UNK4-1"/>
    <property type="nucleotide sequence ID" value="NM_012400.4"/>
</dbReference>
<dbReference type="SMR" id="Q9UNK4"/>
<dbReference type="BioGRID" id="117662">
    <property type="interactions" value="29"/>
</dbReference>
<dbReference type="FunCoup" id="Q9UNK4">
    <property type="interactions" value="504"/>
</dbReference>
<dbReference type="IntAct" id="Q9UNK4">
    <property type="interactions" value="19"/>
</dbReference>
<dbReference type="STRING" id="9606.ENSP00000364246"/>
<dbReference type="BindingDB" id="Q9UNK4"/>
<dbReference type="ChEMBL" id="CHEMBL4281"/>
<dbReference type="DrugBank" id="DB03017">
    <property type="generic name" value="Lauric acid"/>
</dbReference>
<dbReference type="DrugBank" id="DB03193">
    <property type="generic name" value="Stearic acid"/>
</dbReference>
<dbReference type="GuidetoPHARMACOLOGY" id="1418"/>
<dbReference type="SwissLipids" id="SLP:000000652"/>
<dbReference type="GlyCosmos" id="Q9UNK4">
    <property type="glycosylation" value="1 site, No reported glycans"/>
</dbReference>
<dbReference type="GlyGen" id="Q9UNK4">
    <property type="glycosylation" value="1 site"/>
</dbReference>
<dbReference type="iPTMnet" id="Q9UNK4"/>
<dbReference type="PhosphoSitePlus" id="Q9UNK4"/>
<dbReference type="BioMuta" id="PLA2G2D"/>
<dbReference type="DMDM" id="20139286"/>
<dbReference type="MassIVE" id="Q9UNK4"/>
<dbReference type="PaxDb" id="9606-ENSP00000364246"/>
<dbReference type="PeptideAtlas" id="Q9UNK4"/>
<dbReference type="Antibodypedia" id="47984">
    <property type="antibodies" value="188 antibodies from 20 providers"/>
</dbReference>
<dbReference type="DNASU" id="26279"/>
<dbReference type="Ensembl" id="ENST00000375105.8">
    <molecule id="Q9UNK4-1"/>
    <property type="protein sequence ID" value="ENSP00000364246.3"/>
    <property type="gene ID" value="ENSG00000117215.15"/>
</dbReference>
<dbReference type="Ensembl" id="ENST00000617227.1">
    <molecule id="Q9UNK4-2"/>
    <property type="protein sequence ID" value="ENSP00000482871.1"/>
    <property type="gene ID" value="ENSG00000117215.15"/>
</dbReference>
<dbReference type="GeneID" id="26279"/>
<dbReference type="KEGG" id="hsa:26279"/>
<dbReference type="MANE-Select" id="ENST00000375105.8">
    <property type="protein sequence ID" value="ENSP00000364246.3"/>
    <property type="RefSeq nucleotide sequence ID" value="NM_012400.4"/>
    <property type="RefSeq protein sequence ID" value="NP_036532.1"/>
</dbReference>
<dbReference type="UCSC" id="uc001bcz.5">
    <molecule id="Q9UNK4-1"/>
    <property type="organism name" value="human"/>
</dbReference>
<dbReference type="AGR" id="HGNC:9033"/>
<dbReference type="CTD" id="26279"/>
<dbReference type="DisGeNET" id="26279"/>
<dbReference type="GeneCards" id="PLA2G2D"/>
<dbReference type="HGNC" id="HGNC:9033">
    <property type="gene designation" value="PLA2G2D"/>
</dbReference>
<dbReference type="HPA" id="ENSG00000117215">
    <property type="expression patterns" value="Tissue enriched (lymphoid)"/>
</dbReference>
<dbReference type="MIM" id="605630">
    <property type="type" value="gene"/>
</dbReference>
<dbReference type="neXtProt" id="NX_Q9UNK4"/>
<dbReference type="OpenTargets" id="ENSG00000117215"/>
<dbReference type="PharmGKB" id="PA33363"/>
<dbReference type="VEuPathDB" id="HostDB:ENSG00000117215"/>
<dbReference type="eggNOG" id="KOG4087">
    <property type="taxonomic scope" value="Eukaryota"/>
</dbReference>
<dbReference type="GeneTree" id="ENSGT00940000161938"/>
<dbReference type="HOGENOM" id="CLU_090683_3_0_1"/>
<dbReference type="InParanoid" id="Q9UNK4"/>
<dbReference type="OMA" id="GDIQCSD"/>
<dbReference type="OrthoDB" id="5841574at2759"/>
<dbReference type="PAN-GO" id="Q9UNK4">
    <property type="GO annotations" value="5 GO annotations based on evolutionary models"/>
</dbReference>
<dbReference type="PhylomeDB" id="Q9UNK4"/>
<dbReference type="TreeFam" id="TF319283"/>
<dbReference type="BRENDA" id="3.1.1.4">
    <property type="organism ID" value="2681"/>
</dbReference>
<dbReference type="PathwayCommons" id="Q9UNK4"/>
<dbReference type="Reactome" id="R-HSA-1482788">
    <property type="pathway name" value="Acyl chain remodelling of PC"/>
</dbReference>
<dbReference type="Reactome" id="R-HSA-1482801">
    <property type="pathway name" value="Acyl chain remodelling of PS"/>
</dbReference>
<dbReference type="Reactome" id="R-HSA-1482839">
    <property type="pathway name" value="Acyl chain remodelling of PE"/>
</dbReference>
<dbReference type="Reactome" id="R-HSA-1482922">
    <property type="pathway name" value="Acyl chain remodelling of PI"/>
</dbReference>
<dbReference type="Reactome" id="R-HSA-1482925">
    <property type="pathway name" value="Acyl chain remodelling of PG"/>
</dbReference>
<dbReference type="Reactome" id="R-HSA-1483166">
    <property type="pathway name" value="Synthesis of PA"/>
</dbReference>
<dbReference type="SignaLink" id="Q9UNK4"/>
<dbReference type="BioGRID-ORCS" id="26279">
    <property type="hits" value="9 hits in 1144 CRISPR screens"/>
</dbReference>
<dbReference type="ChiTaRS" id="PLA2G2D">
    <property type="organism name" value="human"/>
</dbReference>
<dbReference type="GeneWiki" id="PLA2G2D"/>
<dbReference type="GenomeRNAi" id="26279"/>
<dbReference type="Pharos" id="Q9UNK4">
    <property type="development level" value="Tchem"/>
</dbReference>
<dbReference type="PRO" id="PR:Q9UNK4"/>
<dbReference type="Proteomes" id="UP000005640">
    <property type="component" value="Chromosome 1"/>
</dbReference>
<dbReference type="RNAct" id="Q9UNK4">
    <property type="molecule type" value="protein"/>
</dbReference>
<dbReference type="Bgee" id="ENSG00000117215">
    <property type="expression patterns" value="Expressed in lymph node and 66 other cell types or tissues"/>
</dbReference>
<dbReference type="GO" id="GO:0005576">
    <property type="term" value="C:extracellular region"/>
    <property type="evidence" value="ECO:0000304"/>
    <property type="project" value="Reactome"/>
</dbReference>
<dbReference type="GO" id="GO:0005509">
    <property type="term" value="F:calcium ion binding"/>
    <property type="evidence" value="ECO:0000318"/>
    <property type="project" value="GO_Central"/>
</dbReference>
<dbReference type="GO" id="GO:0047498">
    <property type="term" value="F:calcium-dependent phospholipase A2 activity"/>
    <property type="evidence" value="ECO:0000314"/>
    <property type="project" value="UniProtKB"/>
</dbReference>
<dbReference type="GO" id="GO:0043395">
    <property type="term" value="F:heparan sulfate proteoglycan binding"/>
    <property type="evidence" value="ECO:0007669"/>
    <property type="project" value="Ensembl"/>
</dbReference>
<dbReference type="GO" id="GO:0008201">
    <property type="term" value="F:heparin binding"/>
    <property type="evidence" value="ECO:0007669"/>
    <property type="project" value="Ensembl"/>
</dbReference>
<dbReference type="GO" id="GO:0004623">
    <property type="term" value="F:phospholipase A2 activity"/>
    <property type="evidence" value="ECO:0000304"/>
    <property type="project" value="ProtInc"/>
</dbReference>
<dbReference type="GO" id="GO:0005543">
    <property type="term" value="F:phospholipid binding"/>
    <property type="evidence" value="ECO:0000318"/>
    <property type="project" value="GO_Central"/>
</dbReference>
<dbReference type="GO" id="GO:0050482">
    <property type="term" value="P:arachidonate secretion"/>
    <property type="evidence" value="ECO:0007669"/>
    <property type="project" value="InterPro"/>
</dbReference>
<dbReference type="GO" id="GO:0002361">
    <property type="term" value="P:CD4-positive, CD25-positive, alpha-beta regulatory T cell differentiation"/>
    <property type="evidence" value="ECO:0007669"/>
    <property type="project" value="Ensembl"/>
</dbReference>
<dbReference type="GO" id="GO:0006954">
    <property type="term" value="P:inflammatory response"/>
    <property type="evidence" value="ECO:0000304"/>
    <property type="project" value="ProtInc"/>
</dbReference>
<dbReference type="GO" id="GO:0016042">
    <property type="term" value="P:lipid catabolic process"/>
    <property type="evidence" value="ECO:0007669"/>
    <property type="project" value="UniProtKB-KW"/>
</dbReference>
<dbReference type="GO" id="GO:0042130">
    <property type="term" value="P:negative regulation of T cell proliferation"/>
    <property type="evidence" value="ECO:0000318"/>
    <property type="project" value="GO_Central"/>
</dbReference>
<dbReference type="GO" id="GO:0046470">
    <property type="term" value="P:phosphatidylcholine metabolic process"/>
    <property type="evidence" value="ECO:0000314"/>
    <property type="project" value="UniProtKB"/>
</dbReference>
<dbReference type="GO" id="GO:0046337">
    <property type="term" value="P:phosphatidylethanolamine metabolic process"/>
    <property type="evidence" value="ECO:0000250"/>
    <property type="project" value="UniProtKB"/>
</dbReference>
<dbReference type="GO" id="GO:0046471">
    <property type="term" value="P:phosphatidylglycerol metabolic process"/>
    <property type="evidence" value="ECO:0000318"/>
    <property type="project" value="GO_Central"/>
</dbReference>
<dbReference type="GO" id="GO:0006644">
    <property type="term" value="P:phospholipid metabolic process"/>
    <property type="evidence" value="ECO:0000304"/>
    <property type="project" value="ProtInc"/>
</dbReference>
<dbReference type="GO" id="GO:0002864">
    <property type="term" value="P:regulation of acute inflammatory response to antigenic stimulus"/>
    <property type="evidence" value="ECO:0000250"/>
    <property type="project" value="UniProtKB"/>
</dbReference>
<dbReference type="CDD" id="cd00125">
    <property type="entry name" value="PLA2c"/>
    <property type="match status" value="1"/>
</dbReference>
<dbReference type="FunFam" id="1.20.90.10:FF:000001">
    <property type="entry name" value="Basic phospholipase A2 homolog"/>
    <property type="match status" value="1"/>
</dbReference>
<dbReference type="Gene3D" id="1.20.90.10">
    <property type="entry name" value="Phospholipase A2 domain"/>
    <property type="match status" value="1"/>
</dbReference>
<dbReference type="InterPro" id="IPR001211">
    <property type="entry name" value="PLipase_A2"/>
</dbReference>
<dbReference type="InterPro" id="IPR033112">
    <property type="entry name" value="PLipase_A2_Asp_AS"/>
</dbReference>
<dbReference type="InterPro" id="IPR016090">
    <property type="entry name" value="PLipase_A2_dom"/>
</dbReference>
<dbReference type="InterPro" id="IPR036444">
    <property type="entry name" value="PLipase_A2_dom_sf"/>
</dbReference>
<dbReference type="InterPro" id="IPR033113">
    <property type="entry name" value="PLipase_A2_His_AS"/>
</dbReference>
<dbReference type="PANTHER" id="PTHR11716:SF57">
    <property type="entry name" value="GROUP IID SECRETORY PHOSPHOLIPASE A2"/>
    <property type="match status" value="1"/>
</dbReference>
<dbReference type="PANTHER" id="PTHR11716">
    <property type="entry name" value="PHOSPHOLIPASE A2 FAMILY MEMBER"/>
    <property type="match status" value="1"/>
</dbReference>
<dbReference type="Pfam" id="PF00068">
    <property type="entry name" value="Phospholip_A2_1"/>
    <property type="match status" value="1"/>
</dbReference>
<dbReference type="PRINTS" id="PR00389">
    <property type="entry name" value="PHPHLIPASEA2"/>
</dbReference>
<dbReference type="SMART" id="SM00085">
    <property type="entry name" value="PA2c"/>
    <property type="match status" value="1"/>
</dbReference>
<dbReference type="SUPFAM" id="SSF48619">
    <property type="entry name" value="Phospholipase A2, PLA2"/>
    <property type="match status" value="1"/>
</dbReference>
<dbReference type="PROSITE" id="PS00119">
    <property type="entry name" value="PA2_ASP"/>
    <property type="match status" value="1"/>
</dbReference>
<dbReference type="PROSITE" id="PS00118">
    <property type="entry name" value="PA2_HIS"/>
    <property type="match status" value="1"/>
</dbReference>
<name>PA2GD_HUMAN</name>
<keyword id="KW-0025">Alternative splicing</keyword>
<keyword id="KW-0106">Calcium</keyword>
<keyword id="KW-1015">Disulfide bond</keyword>
<keyword id="KW-0325">Glycoprotein</keyword>
<keyword id="KW-0378">Hydrolase</keyword>
<keyword id="KW-0442">Lipid degradation</keyword>
<keyword id="KW-0443">Lipid metabolism</keyword>
<keyword id="KW-0479">Metal-binding</keyword>
<keyword id="KW-1267">Proteomics identification</keyword>
<keyword id="KW-1185">Reference proteome</keyword>
<keyword id="KW-0964">Secreted</keyword>
<keyword id="KW-0732">Signal</keyword>
<gene>
    <name type="primary">PLA2G2D</name>
    <name type="synonym">SPLASH</name>
</gene>
<organism>
    <name type="scientific">Homo sapiens</name>
    <name type="common">Human</name>
    <dbReference type="NCBI Taxonomy" id="9606"/>
    <lineage>
        <taxon>Eukaryota</taxon>
        <taxon>Metazoa</taxon>
        <taxon>Chordata</taxon>
        <taxon>Craniata</taxon>
        <taxon>Vertebrata</taxon>
        <taxon>Euteleostomi</taxon>
        <taxon>Mammalia</taxon>
        <taxon>Eutheria</taxon>
        <taxon>Euarchontoglires</taxon>
        <taxon>Primates</taxon>
        <taxon>Haplorrhini</taxon>
        <taxon>Catarrhini</taxon>
        <taxon>Hominidae</taxon>
        <taxon>Homo</taxon>
    </lineage>
</organism>
<evidence type="ECO:0000250" key="1"/>
<evidence type="ECO:0000250" key="2">
    <source>
        <dbReference type="UniProtKB" id="P14555"/>
    </source>
</evidence>
<evidence type="ECO:0000250" key="3">
    <source>
        <dbReference type="UniProtKB" id="Q9WVF6"/>
    </source>
</evidence>
<evidence type="ECO:0000255" key="4"/>
<evidence type="ECO:0000255" key="5">
    <source>
        <dbReference type="PROSITE-ProRule" id="PRU10035"/>
    </source>
</evidence>
<evidence type="ECO:0000269" key="6">
    <source>
    </source>
</evidence>
<evidence type="ECO:0000269" key="7">
    <source>
    </source>
</evidence>
<evidence type="ECO:0000269" key="8">
    <source>
    </source>
</evidence>
<evidence type="ECO:0000269" key="9">
    <source ref="4"/>
</evidence>
<evidence type="ECO:0000305" key="10"/>
<evidence type="ECO:0000305" key="11">
    <source>
    </source>
</evidence>
<evidence type="ECO:0000305" key="12">
    <source>
    </source>
</evidence>
<sequence length="145" mass="16546">MELALLCGLVVMAGVIPIQGGILNLNKMVKQVTGKMPILSYWPYGCHCGLGGRGQPKDATDWCCQTHDCCYDHLKTQGCSIYKDYYRYNFSQGNIHCSDKGSWCEQQLCACDKEVAFCLKRNLDTYQKRLRFYWRPHCRGQTPGC</sequence>
<reference key="1">
    <citation type="journal article" date="1999" name="J. Biol. Chem.">
        <title>Cloning and characterization of novel mouse and human secretory phospholipase A2s.</title>
        <authorList>
            <person name="Ishizaki J."/>
            <person name="Suzuki N."/>
            <person name="Higashino K."/>
            <person name="Yokota Y."/>
            <person name="Ono T."/>
            <person name="Kawamoto K."/>
            <person name="Fujii N."/>
            <person name="Arita H."/>
            <person name="Hanasaki K."/>
        </authorList>
    </citation>
    <scope>NUCLEOTIDE SEQUENCE [MRNA] (ISOFORM 1)</scope>
    <scope>FUNCTION</scope>
    <scope>CATALYTIC ACTIVITY</scope>
    <scope>COFACTOR</scope>
    <scope>BIOPHYSICOCHEMICAL PROPERTIES</scope>
    <scope>TISSUE SPECIFICITY</scope>
    <scope>SUBCELLULAR LOCATION</scope>
    <scope>VARIANT GLY-80</scope>
</reference>
<reference key="2">
    <citation type="journal article" date="2000" name="Genes Immun.">
        <title>SPLASH (PLA(2)IID), a novel member of phospholipase A2 family, is associated with lymphotoxin-deficiency.</title>
        <authorList>
            <person name="Shakhov A.N."/>
            <person name="Rubtsov A.V."/>
            <person name="Lyakhov I.G."/>
            <person name="Tumanov A.V."/>
            <person name="Nedospasov S.A."/>
        </authorList>
    </citation>
    <scope>NUCLEOTIDE SEQUENCE [MRNA] (ISOFORM 1)</scope>
</reference>
<reference key="3">
    <citation type="journal article" date="2004" name="Nat. Genet.">
        <title>Complete sequencing and characterization of 21,243 full-length human cDNAs.</title>
        <authorList>
            <person name="Ota T."/>
            <person name="Suzuki Y."/>
            <person name="Nishikawa T."/>
            <person name="Otsuki T."/>
            <person name="Sugiyama T."/>
            <person name="Irie R."/>
            <person name="Wakamatsu A."/>
            <person name="Hayashi K."/>
            <person name="Sato H."/>
            <person name="Nagai K."/>
            <person name="Kimura K."/>
            <person name="Makita H."/>
            <person name="Sekine M."/>
            <person name="Obayashi M."/>
            <person name="Nishi T."/>
            <person name="Shibahara T."/>
            <person name="Tanaka T."/>
            <person name="Ishii S."/>
            <person name="Yamamoto J."/>
            <person name="Saito K."/>
            <person name="Kawai Y."/>
            <person name="Isono Y."/>
            <person name="Nakamura Y."/>
            <person name="Nagahari K."/>
            <person name="Murakami K."/>
            <person name="Yasuda T."/>
            <person name="Iwayanagi T."/>
            <person name="Wagatsuma M."/>
            <person name="Shiratori A."/>
            <person name="Sudo H."/>
            <person name="Hosoiri T."/>
            <person name="Kaku Y."/>
            <person name="Kodaira H."/>
            <person name="Kondo H."/>
            <person name="Sugawara M."/>
            <person name="Takahashi M."/>
            <person name="Kanda K."/>
            <person name="Yokoi T."/>
            <person name="Furuya T."/>
            <person name="Kikkawa E."/>
            <person name="Omura Y."/>
            <person name="Abe K."/>
            <person name="Kamihara K."/>
            <person name="Katsuta N."/>
            <person name="Sato K."/>
            <person name="Tanikawa M."/>
            <person name="Yamazaki M."/>
            <person name="Ninomiya K."/>
            <person name="Ishibashi T."/>
            <person name="Yamashita H."/>
            <person name="Murakawa K."/>
            <person name="Fujimori K."/>
            <person name="Tanai H."/>
            <person name="Kimata M."/>
            <person name="Watanabe M."/>
            <person name="Hiraoka S."/>
            <person name="Chiba Y."/>
            <person name="Ishida S."/>
            <person name="Ono Y."/>
            <person name="Takiguchi S."/>
            <person name="Watanabe S."/>
            <person name="Yosida M."/>
            <person name="Hotuta T."/>
            <person name="Kusano J."/>
            <person name="Kanehori K."/>
            <person name="Takahashi-Fujii A."/>
            <person name="Hara H."/>
            <person name="Tanase T.-O."/>
            <person name="Nomura Y."/>
            <person name="Togiya S."/>
            <person name="Komai F."/>
            <person name="Hara R."/>
            <person name="Takeuchi K."/>
            <person name="Arita M."/>
            <person name="Imose N."/>
            <person name="Musashino K."/>
            <person name="Yuuki H."/>
            <person name="Oshima A."/>
            <person name="Sasaki N."/>
            <person name="Aotsuka S."/>
            <person name="Yoshikawa Y."/>
            <person name="Matsunawa H."/>
            <person name="Ichihara T."/>
            <person name="Shiohata N."/>
            <person name="Sano S."/>
            <person name="Moriya S."/>
            <person name="Momiyama H."/>
            <person name="Satoh N."/>
            <person name="Takami S."/>
            <person name="Terashima Y."/>
            <person name="Suzuki O."/>
            <person name="Nakagawa S."/>
            <person name="Senoh A."/>
            <person name="Mizoguchi H."/>
            <person name="Goto Y."/>
            <person name="Shimizu F."/>
            <person name="Wakebe H."/>
            <person name="Hishigaki H."/>
            <person name="Watanabe T."/>
            <person name="Sugiyama A."/>
            <person name="Takemoto M."/>
            <person name="Kawakami B."/>
            <person name="Yamazaki M."/>
            <person name="Watanabe K."/>
            <person name="Kumagai A."/>
            <person name="Itakura S."/>
            <person name="Fukuzumi Y."/>
            <person name="Fujimori Y."/>
            <person name="Komiyama M."/>
            <person name="Tashiro H."/>
            <person name="Tanigami A."/>
            <person name="Fujiwara T."/>
            <person name="Ono T."/>
            <person name="Yamada K."/>
            <person name="Fujii Y."/>
            <person name="Ozaki K."/>
            <person name="Hirao M."/>
            <person name="Ohmori Y."/>
            <person name="Kawabata A."/>
            <person name="Hikiji T."/>
            <person name="Kobatake N."/>
            <person name="Inagaki H."/>
            <person name="Ikema Y."/>
            <person name="Okamoto S."/>
            <person name="Okitani R."/>
            <person name="Kawakami T."/>
            <person name="Noguchi S."/>
            <person name="Itoh T."/>
            <person name="Shigeta K."/>
            <person name="Senba T."/>
            <person name="Matsumura K."/>
            <person name="Nakajima Y."/>
            <person name="Mizuno T."/>
            <person name="Morinaga M."/>
            <person name="Sasaki M."/>
            <person name="Togashi T."/>
            <person name="Oyama M."/>
            <person name="Hata H."/>
            <person name="Watanabe M."/>
            <person name="Komatsu T."/>
            <person name="Mizushima-Sugano J."/>
            <person name="Satoh T."/>
            <person name="Shirai Y."/>
            <person name="Takahashi Y."/>
            <person name="Nakagawa K."/>
            <person name="Okumura K."/>
            <person name="Nagase T."/>
            <person name="Nomura N."/>
            <person name="Kikuchi H."/>
            <person name="Masuho Y."/>
            <person name="Yamashita R."/>
            <person name="Nakai K."/>
            <person name="Yada T."/>
            <person name="Nakamura Y."/>
            <person name="Ohara O."/>
            <person name="Isogai T."/>
            <person name="Sugano S."/>
        </authorList>
    </citation>
    <scope>NUCLEOTIDE SEQUENCE [LARGE SCALE MRNA] (ISOFORMS 1 AND 2)</scope>
    <scope>VARIANT GLY-80</scope>
    <source>
        <tissue>Umbilical cord blood</tissue>
    </source>
</reference>
<reference key="4">
    <citation type="submission" date="2008-02" db="EMBL/GenBank/DDBJ databases">
        <authorList>
            <consortium name="NIEHS SNPs program"/>
        </authorList>
    </citation>
    <scope>NUCLEOTIDE SEQUENCE [GENOMIC DNA]</scope>
    <scope>VARIANTS HIS-65; ARG-73; GLY-80; ARG-96; CYS-121 AND LEU-121</scope>
</reference>
<reference key="5">
    <citation type="journal article" date="2006" name="Nature">
        <title>The DNA sequence and biological annotation of human chromosome 1.</title>
        <authorList>
            <person name="Gregory S.G."/>
            <person name="Barlow K.F."/>
            <person name="McLay K.E."/>
            <person name="Kaul R."/>
            <person name="Swarbreck D."/>
            <person name="Dunham A."/>
            <person name="Scott C.E."/>
            <person name="Howe K.L."/>
            <person name="Woodfine K."/>
            <person name="Spencer C.C.A."/>
            <person name="Jones M.C."/>
            <person name="Gillson C."/>
            <person name="Searle S."/>
            <person name="Zhou Y."/>
            <person name="Kokocinski F."/>
            <person name="McDonald L."/>
            <person name="Evans R."/>
            <person name="Phillips K."/>
            <person name="Atkinson A."/>
            <person name="Cooper R."/>
            <person name="Jones C."/>
            <person name="Hall R.E."/>
            <person name="Andrews T.D."/>
            <person name="Lloyd C."/>
            <person name="Ainscough R."/>
            <person name="Almeida J.P."/>
            <person name="Ambrose K.D."/>
            <person name="Anderson F."/>
            <person name="Andrew R.W."/>
            <person name="Ashwell R.I.S."/>
            <person name="Aubin K."/>
            <person name="Babbage A.K."/>
            <person name="Bagguley C.L."/>
            <person name="Bailey J."/>
            <person name="Beasley H."/>
            <person name="Bethel G."/>
            <person name="Bird C.P."/>
            <person name="Bray-Allen S."/>
            <person name="Brown J.Y."/>
            <person name="Brown A.J."/>
            <person name="Buckley D."/>
            <person name="Burton J."/>
            <person name="Bye J."/>
            <person name="Carder C."/>
            <person name="Chapman J.C."/>
            <person name="Clark S.Y."/>
            <person name="Clarke G."/>
            <person name="Clee C."/>
            <person name="Cobley V."/>
            <person name="Collier R.E."/>
            <person name="Corby N."/>
            <person name="Coville G.J."/>
            <person name="Davies J."/>
            <person name="Deadman R."/>
            <person name="Dunn M."/>
            <person name="Earthrowl M."/>
            <person name="Ellington A.G."/>
            <person name="Errington H."/>
            <person name="Frankish A."/>
            <person name="Frankland J."/>
            <person name="French L."/>
            <person name="Garner P."/>
            <person name="Garnett J."/>
            <person name="Gay L."/>
            <person name="Ghori M.R.J."/>
            <person name="Gibson R."/>
            <person name="Gilby L.M."/>
            <person name="Gillett W."/>
            <person name="Glithero R.J."/>
            <person name="Grafham D.V."/>
            <person name="Griffiths C."/>
            <person name="Griffiths-Jones S."/>
            <person name="Grocock R."/>
            <person name="Hammond S."/>
            <person name="Harrison E.S.I."/>
            <person name="Hart E."/>
            <person name="Haugen E."/>
            <person name="Heath P.D."/>
            <person name="Holmes S."/>
            <person name="Holt K."/>
            <person name="Howden P.J."/>
            <person name="Hunt A.R."/>
            <person name="Hunt S.E."/>
            <person name="Hunter G."/>
            <person name="Isherwood J."/>
            <person name="James R."/>
            <person name="Johnson C."/>
            <person name="Johnson D."/>
            <person name="Joy A."/>
            <person name="Kay M."/>
            <person name="Kershaw J.K."/>
            <person name="Kibukawa M."/>
            <person name="Kimberley A.M."/>
            <person name="King A."/>
            <person name="Knights A.J."/>
            <person name="Lad H."/>
            <person name="Laird G."/>
            <person name="Lawlor S."/>
            <person name="Leongamornlert D.A."/>
            <person name="Lloyd D.M."/>
            <person name="Loveland J."/>
            <person name="Lovell J."/>
            <person name="Lush M.J."/>
            <person name="Lyne R."/>
            <person name="Martin S."/>
            <person name="Mashreghi-Mohammadi M."/>
            <person name="Matthews L."/>
            <person name="Matthews N.S.W."/>
            <person name="McLaren S."/>
            <person name="Milne S."/>
            <person name="Mistry S."/>
            <person name="Moore M.J.F."/>
            <person name="Nickerson T."/>
            <person name="O'Dell C.N."/>
            <person name="Oliver K."/>
            <person name="Palmeiri A."/>
            <person name="Palmer S.A."/>
            <person name="Parker A."/>
            <person name="Patel D."/>
            <person name="Pearce A.V."/>
            <person name="Peck A.I."/>
            <person name="Pelan S."/>
            <person name="Phelps K."/>
            <person name="Phillimore B.J."/>
            <person name="Plumb R."/>
            <person name="Rajan J."/>
            <person name="Raymond C."/>
            <person name="Rouse G."/>
            <person name="Saenphimmachak C."/>
            <person name="Sehra H.K."/>
            <person name="Sheridan E."/>
            <person name="Shownkeen R."/>
            <person name="Sims S."/>
            <person name="Skuce C.D."/>
            <person name="Smith M."/>
            <person name="Steward C."/>
            <person name="Subramanian S."/>
            <person name="Sycamore N."/>
            <person name="Tracey A."/>
            <person name="Tromans A."/>
            <person name="Van Helmond Z."/>
            <person name="Wall M."/>
            <person name="Wallis J.M."/>
            <person name="White S."/>
            <person name="Whitehead S.L."/>
            <person name="Wilkinson J.E."/>
            <person name="Willey D.L."/>
            <person name="Williams H."/>
            <person name="Wilming L."/>
            <person name="Wray P.W."/>
            <person name="Wu Z."/>
            <person name="Coulson A."/>
            <person name="Vaudin M."/>
            <person name="Sulston J.E."/>
            <person name="Durbin R.M."/>
            <person name="Hubbard T."/>
            <person name="Wooster R."/>
            <person name="Dunham I."/>
            <person name="Carter N.P."/>
            <person name="McVean G."/>
            <person name="Ross M.T."/>
            <person name="Harrow J."/>
            <person name="Olson M.V."/>
            <person name="Beck S."/>
            <person name="Rogers J."/>
            <person name="Bentley D.R."/>
        </authorList>
    </citation>
    <scope>NUCLEOTIDE SEQUENCE [LARGE SCALE GENOMIC DNA] (ISOFORMS 1 AND 2)</scope>
</reference>
<reference key="6">
    <citation type="journal article" date="2004" name="Genome Res.">
        <title>The status, quality, and expansion of the NIH full-length cDNA project: the Mammalian Gene Collection (MGC).</title>
        <authorList>
            <consortium name="The MGC Project Team"/>
        </authorList>
    </citation>
    <scope>NUCLEOTIDE SEQUENCE [LARGE SCALE MRNA] (ISOFORM 1)</scope>
    <source>
        <tissue>Pancreas</tissue>
        <tissue>Spleen</tissue>
    </source>
</reference>
<reference key="7">
    <citation type="journal article" date="2000" name="J. Biol. Chem.">
        <title>Structures, enzymatic properties, and expression of novel human and mouse secretory phospholipase A(2)s.</title>
        <authorList>
            <person name="Suzuki N."/>
            <person name="Ishizaki J."/>
            <person name="Yokota Y."/>
            <person name="Higashino K."/>
            <person name="Ono T."/>
            <person name="Ikeda M."/>
            <person name="Fujii N."/>
            <person name="Kawamoto K."/>
            <person name="Hanasaki K."/>
        </authorList>
    </citation>
    <scope>FUNCTION</scope>
    <scope>CATALYTIC ACTIVITY</scope>
</reference>
<feature type="signal peptide" evidence="4">
    <location>
        <begin position="1"/>
        <end position="20"/>
    </location>
</feature>
<feature type="chain" id="PRO_0000022755" description="Group IID secretory phospholipase A2">
    <location>
        <begin position="21"/>
        <end position="145"/>
    </location>
</feature>
<feature type="active site" evidence="1">
    <location>
        <position position="67"/>
    </location>
</feature>
<feature type="active site" evidence="1">
    <location>
        <position position="112"/>
    </location>
</feature>
<feature type="binding site" evidence="2">
    <location>
        <position position="47"/>
    </location>
    <ligand>
        <name>Ca(2+)</name>
        <dbReference type="ChEBI" id="CHEBI:29108"/>
    </ligand>
</feature>
<feature type="binding site" evidence="2">
    <location>
        <position position="49"/>
    </location>
    <ligand>
        <name>Ca(2+)</name>
        <dbReference type="ChEBI" id="CHEBI:29108"/>
    </ligand>
</feature>
<feature type="binding site" evidence="2">
    <location>
        <position position="51"/>
    </location>
    <ligand>
        <name>Ca(2+)</name>
        <dbReference type="ChEBI" id="CHEBI:29108"/>
    </ligand>
</feature>
<feature type="binding site" evidence="2">
    <location>
        <position position="68"/>
    </location>
    <ligand>
        <name>Ca(2+)</name>
        <dbReference type="ChEBI" id="CHEBI:29108"/>
    </ligand>
</feature>
<feature type="glycosylation site" description="N-linked (GlcNAc...) asparagine" evidence="4">
    <location>
        <position position="89"/>
    </location>
</feature>
<feature type="disulfide bond" evidence="2">
    <location>
        <begin position="46"/>
        <end position="138"/>
    </location>
</feature>
<feature type="disulfide bond" evidence="2">
    <location>
        <begin position="48"/>
        <end position="64"/>
    </location>
</feature>
<feature type="disulfide bond" evidence="2">
    <location>
        <begin position="63"/>
        <end position="118"/>
    </location>
</feature>
<feature type="disulfide bond" evidence="2">
    <location>
        <begin position="69"/>
        <end position="145"/>
    </location>
</feature>
<feature type="disulfide bond" evidence="2">
    <location>
        <begin position="70"/>
        <end position="111"/>
    </location>
</feature>
<feature type="disulfide bond" evidence="2">
    <location>
        <begin position="79"/>
        <end position="104"/>
    </location>
</feature>
<feature type="disulfide bond" evidence="2">
    <location>
        <begin position="97"/>
        <end position="109"/>
    </location>
</feature>
<feature type="splice variant" id="VSP_060595" description="In isoform 2.">
    <original>W</original>
    <variation>C</variation>
    <location>
        <position position="62"/>
    </location>
</feature>
<feature type="splice variant" id="VSP_060596" description="In isoform 2.">
    <location>
        <begin position="63"/>
        <end position="145"/>
    </location>
</feature>
<feature type="sequence variant" id="VAR_055387" description="In dbSNP:rs62541890." evidence="9">
    <original>Q</original>
    <variation>H</variation>
    <location>
        <position position="65"/>
    </location>
</feature>
<feature type="sequence variant" id="VAR_055388" description="In dbSNP:rs62541891." evidence="9">
    <original>H</original>
    <variation>R</variation>
    <location>
        <position position="73"/>
    </location>
</feature>
<feature type="sequence variant" id="VAR_012741" description="In dbSNP:rs584367." evidence="6 8 9">
    <original>S</original>
    <variation>G</variation>
    <location>
        <position position="80"/>
    </location>
</feature>
<feature type="sequence variant" id="VAR_055389" description="In dbSNP:rs62541892." evidence="9">
    <original>H</original>
    <variation>R</variation>
    <location>
        <position position="96"/>
    </location>
</feature>
<feature type="sequence variant" id="VAR_055390" description="In dbSNP:rs62541900." evidence="9">
    <original>R</original>
    <variation>C</variation>
    <location>
        <position position="121"/>
    </location>
</feature>
<feature type="sequence variant" id="VAR_055391" description="In dbSNP:rs62541901." evidence="9">
    <original>R</original>
    <variation>L</variation>
    <location>
        <position position="121"/>
    </location>
</feature>